<comment type="function">
    <text evidence="3 9 19 22 30 32 35">Signaling adapter protein that participates in the signal transduction from two prominent receptor tyrosine kinases, insulin receptor/INSR and insulin-like growth factor I receptor/IGF1R (PubMed:7541045, PubMed:33991522, PubMed:38625937). Plays therefore an important role in development, growth, glucose homeostasis as well as lipid metabolism (PubMed:19639489). Upon phosphorylation by the insulin receptor, functions as a signaling scaffold that propagates insulin action through binding to SH2 domain-containing proteins including the p85 regulatory subunit of PI3K, NCK1, NCK2, GRB2 or SHP2 (PubMed:11171109, PubMed:8265614). Recruitment of GRB2 leads to the activation of the guanine nucleotide exchange factor SOS1 which in turn triggers the Ras/Raf/MEK/MAPK signaling cascade (By similarity). Activation of the PI3K/AKT pathway is responsible for most of insulin metabolic effects in the cell, and the Ras/Raf/MEK/MAPK is involved in the regulation of gene expression and in cooperation with the PI3K pathway regulates cell growth and differentiation. Acts a positive regulator of the Wnt/beta-catenin signaling pathway through suppression of DVL2 autophagy-mediated degradation leading to cell proliferation (PubMed:24616100).</text>
</comment>
<comment type="subunit">
    <text evidence="2 3 9 15 18 19 25 26 28 30 31 32 33 35">Interacts with UBTF and PIK3CA (By similarity). Interacts (via phosphorylated YXXM motifs) with PIK3R1 (By similarity). Interacts with ROCK1 and FER (By similarity). Interacts (via PH domain) with PHIP (By similarity). Interacts with GRB2 (By similarity). Interacts with SOCS7 (PubMed:16127460). Interacts (via IRS-type PTB domain) with IGF1R and INSR (via the tyrosine-phosphorylated NPXY motif) (PubMed:7537849, PubMed:7541045, PubMed:7559478, PubMed:33991522, PubMed:38625937). Interacts with ALK (PubMed:15226403, PubMed:16878150). Interacts with EIF2AK2/PKR (By similarity). Interacts with GKAP1 (By similarity). Interacts with DGKZ in the absence of insulin; insulin stimulation decreases this interaction (By similarity). Found in a ternary complex with DGKZ and PIP5K1A in the absence of insulin stimulation (By similarity). Interacts with SQSTM1; the interaction is disrupted by the presence of tensin TNS2 (PubMed:25101860). Interacts with NCK1 (via SH2 domain) (PubMed:8265614). Interacts with NCK2 (via SH3 domain) (PubMed:11171109). Interacts with SH2B1; this interaction enhances leptin-induced activation of the PI3-kinase pathway (By similarity). Interacts with DVL2; this interaction promotes the Wnt/beta-catenin signaling pathway (PubMed:24616100).</text>
</comment>
<comment type="interaction">
    <interactant intactId="EBI-517592">
        <id>P35568</id>
    </interactant>
    <interactant intactId="EBI-702336">
        <id>O75815</id>
        <label>BCAR3</label>
    </interactant>
    <organismsDiffer>false</organismsDiffer>
    <experiments>3</experiments>
</comment>
<comment type="interaction">
    <interactant intactId="EBI-517592">
        <id>P35568</id>
    </interactant>
    <interactant intactId="EBI-641062">
        <id>P04626</id>
        <label>ERBB2</label>
    </interactant>
    <organismsDiffer>false</organismsDiffer>
    <experiments>2</experiments>
</comment>
<comment type="interaction">
    <interactant intactId="EBI-517592">
        <id>P35568</id>
    </interactant>
    <interactant intactId="EBI-475899">
        <id>P06213</id>
        <label>INSR</label>
    </interactant>
    <organismsDiffer>false</organismsDiffer>
    <experiments>3</experiments>
</comment>
<comment type="interaction">
    <interactant intactId="EBI-517592">
        <id>P35568</id>
    </interactant>
    <interactant intactId="EBI-81531">
        <id>P11940</id>
        <label>PABPC1</label>
    </interactant>
    <organismsDiffer>false</organismsDiffer>
    <experiments>2</experiments>
</comment>
<comment type="interaction">
    <interactant intactId="EBI-517592">
        <id>P35568</id>
    </interactant>
    <interactant intactId="EBI-2116585">
        <id>P42336</id>
        <label>PIK3CA</label>
    </interactant>
    <organismsDiffer>false</organismsDiffer>
    <experiments>41</experiments>
</comment>
<comment type="interaction">
    <interactant intactId="EBI-517592">
        <id>P35568</id>
    </interactant>
    <interactant intactId="EBI-79464">
        <id>P27986</id>
        <label>PIK3R1</label>
    </interactant>
    <organismsDiffer>false</organismsDiffer>
    <experiments>12</experiments>
</comment>
<comment type="interaction">
    <interactant intactId="EBI-517592">
        <id>P35568</id>
    </interactant>
    <interactant intactId="EBI-9090282">
        <id>P27986-2</id>
        <label>PIK3R1</label>
    </interactant>
    <organismsDiffer>false</organismsDiffer>
    <experiments>3</experiments>
</comment>
<comment type="interaction">
    <interactant intactId="EBI-517592">
        <id>P35568</id>
    </interactant>
    <interactant intactId="EBI-79893">
        <id>Q92569</id>
        <label>PIK3R3</label>
    </interactant>
    <organismsDiffer>false</organismsDiffer>
    <experiments>4</experiments>
</comment>
<comment type="interaction">
    <interactant intactId="EBI-517592">
        <id>P35568</id>
    </interactant>
    <interactant intactId="EBI-297779">
        <id>Q06124</id>
        <label>PTPN11</label>
    </interactant>
    <organismsDiffer>false</organismsDiffer>
    <experiments>3</experiments>
</comment>
<comment type="interaction">
    <interactant intactId="EBI-517592">
        <id>P35568</id>
    </interactant>
    <interactant intactId="EBI-476295">
        <id>P31947</id>
        <label>SFN</label>
    </interactant>
    <organismsDiffer>false</organismsDiffer>
    <experiments>2</experiments>
</comment>
<comment type="interaction">
    <interactant intactId="EBI-517592">
        <id>P35568</id>
    </interactant>
    <interactant intactId="EBI-356498">
        <id>P62258</id>
        <label>YWHAE</label>
    </interactant>
    <organismsDiffer>false</organismsDiffer>
    <experiments>2</experiments>
</comment>
<comment type="interaction">
    <interactant intactId="EBI-517592">
        <id>P35568</id>
    </interactant>
    <interactant intactId="EBI-2548993">
        <id>P03495</id>
        <label>NS</label>
    </interactant>
    <organismsDiffer>true</organismsDiffer>
    <experiments>2</experiments>
</comment>
<comment type="interaction">
    <interactant intactId="EBI-517592">
        <id>P35568</id>
    </interactant>
    <interactant intactId="EBI-617698">
        <id>P03070</id>
    </interactant>
    <organismsDiffer>true</organismsDiffer>
    <experiments>2</experiments>
</comment>
<comment type="subcellular location">
    <subcellularLocation>
        <location evidence="22">Cytoplasm</location>
    </subcellularLocation>
    <subcellularLocation>
        <location evidence="22">Nucleus</location>
    </subcellularLocation>
    <text evidence="22">Nuclear or cytoplasmic localization of IRS1 correlates with the transition from proliferation to chondrogenic differentiation.</text>
</comment>
<comment type="PTM">
    <text evidence="2 3 16 20 21 23 24 30">Serine phosphorylation of IRS1 is a mechanism for insulin resistance. Ser-307, Ser-312, Ser-315, and Ser-323 phosphorylations inhibit insulin action through disruption of IRS1 interaction with the insulin receptor INSR (PubMed:38625937). Phosphorylation of Tyr-896 is required for GRB2-binding (By similarity). Phosphorylated by ALK. Phosphorylated at Ser-270, Ser-307, Ser-636 and Ser-1101 by RPS6KB1; phosphorylation induces accelerated degradation of IRS1 (PubMed:18952604). Phosphorylated on tyrosine residues in response to insulin (PubMed:23401856). In skeletal muscles, dephosphorylated on Tyr-612 by TNS2 under anabolic conditions; dephosphorylation results in the proteasomal degradation of IRS1 (PubMed:23401856).</text>
</comment>
<comment type="PTM">
    <text evidence="20 28">Ubiquitinated by the Cul7-RING(FBXW8) complex in a mTOR-dependent manner, leading to its degradation: the Cul7-RING(FBXW8) complex recognizes and binds IRS1 previously phosphorylated by S6 kinase (RPS6KB1 or RPS6KB2) (PubMed:18498745). Ubiquitinated by TRAF4 through 'Lys-29' linkage; this ubiquitination regulates the interaction of IRS1 with IGFR and IRS1 tyrosine phosphorylation upon IGF1 stimulation (PubMed:33991522).</text>
</comment>
<comment type="PTM">
    <text evidence="29">S-nitrosylation at by BLVRB inhibits its activity.</text>
</comment>
<comment type="polymorphism">
    <text>The Arg-971 polymorphism impairs the ability of insulin to stimulate glucose transport, glucose transporter translocation, and glycogen synthesis by affecting the PI3K/AKT1/GSK3 signaling pathway. The polymorphism at Arg-971 may contribute to the in vivo insulin resistance observed in carriers of this variant. Arg-971 could contribute to the risk for atherosclerotic cardiovascular diseases associated with non-insulin-dependent diabetes mellitus (NIDDM) by producing a cluster of insulin resistance-related metabolic abnormalities. In insulin-stimulated human endothelial cells from carriers of the Arg-971 polymorphism, genetic impairment of the IRS1/PI3K/PDPK1/AKT1 insulin signaling cascade results in impaired insulin-stimulated nitric oxide (NO) release and suggested that this may be a mechanism through which the Arg-971 polymorphism contributes to the genetic predisposition to develop endothelial dysfunction and cardiovascular disease. The Arg-971 polymorphism not only reduces phosphorylation of the substrate but allows IRS1 to act as an inhibitor of PI3K, producing global insulin resistance.</text>
</comment>
<comment type="disease" evidence="7 12 36">
    <disease id="DI-02060">
        <name>Type 2 diabetes mellitus</name>
        <acronym>T2D</acronym>
        <description>A multifactorial disorder of glucose homeostasis caused by a lack of sensitivity to insulin. Affected individuals usually have an obese body habitus and manifestations of a metabolic syndrome characterized by diabetes, insulin resistance, hypertension and hypertriglyceridemia. The disease results in long-term complications that affect the eyes, kidneys, nerves, and blood vessels.</description>
        <dbReference type="MIM" id="125853"/>
    </disease>
    <text>The gene represented in this entry may be involved in disease pathogenesis.</text>
</comment>
<reference key="1">
    <citation type="journal article" date="1993" name="Diabetes">
        <title>Human skeletal muscle insulin receptor substrate-1. Characterization of the cDNA, gene, and chromosomal localization.</title>
        <authorList>
            <person name="Araki E."/>
            <person name="Sun X.J."/>
            <person name="Haag B.L. III"/>
            <person name="Chuang L.M."/>
            <person name="Zhang Y."/>
            <person name="Yang-Feng T.L."/>
            <person name="White M.F."/>
            <person name="Kahn C.R."/>
        </authorList>
    </citation>
    <scope>NUCLEOTIDE SEQUENCE [MRNA]</scope>
    <source>
        <tissue>Skeletal muscle</tissue>
    </source>
</reference>
<reference key="2">
    <citation type="journal article" date="1992" name="Biochem. Biophys. Res. Commun.">
        <title>Cloning and increased expression of an insulin receptor substrate-1-like gene in human hepatocellular carcinoma.</title>
        <authorList>
            <person name="Nishiyama M."/>
            <person name="Wands J.R."/>
        </authorList>
    </citation>
    <scope>NUCLEOTIDE SEQUENCE [MRNA]</scope>
</reference>
<reference key="3">
    <citation type="journal article" date="2004" name="Genome Res.">
        <title>The status, quality, and expansion of the NIH full-length cDNA project: the Mammalian Gene Collection (MGC).</title>
        <authorList>
            <consortium name="The MGC Project Team"/>
        </authorList>
    </citation>
    <scope>NUCLEOTIDE SEQUENCE [LARGE SCALE MRNA]</scope>
    <source>
        <tissue>Eye</tissue>
    </source>
</reference>
<reference key="4">
    <citation type="journal article" date="1993" name="Biochem. Biophys. Res. Commun.">
        <title>The insulin receptor substrate (IRS-1) is a PEST protein that is susceptible to calpain degradation in vitro.</title>
        <authorList>
            <person name="Smith L.K."/>
            <person name="Bradshaw M."/>
            <person name="Croall D.E."/>
            <person name="Garner C.W."/>
        </authorList>
    </citation>
    <scope>TURNOVER</scope>
</reference>
<reference key="5">
    <citation type="journal article" date="1993" name="Proc. Natl. Acad. Sci. U.S.A.">
        <title>Nck associates with the SH2 domain-docking protein IRS-1 in insulin-stimulated cells.</title>
        <authorList>
            <person name="Lee C.H."/>
            <person name="Li W."/>
            <person name="Nishimura R."/>
            <person name="Zhou M."/>
            <person name="Batzer A.G."/>
            <person name="Myers M.G. Jr."/>
            <person name="White M.F."/>
            <person name="Schlessinger J."/>
            <person name="Skolnik E.Y."/>
        </authorList>
    </citation>
    <scope>FUNCTION</scope>
    <scope>INTERACTION WITH NCK1</scope>
</reference>
<reference key="6">
    <citation type="journal article" date="1995" name="J. Biol. Chem.">
        <title>Non-SH2 domains within insulin receptor substrate-1 and SHC mediate their phosphotyrosine-dependent interaction with the NPEY motif of the insulin-like growth factor I receptor.</title>
        <authorList>
            <person name="Craparo A."/>
            <person name="O'Neill T.J."/>
            <person name="Gustafson T.A."/>
        </authorList>
    </citation>
    <scope>INTERACTION WITH IGF1R</scope>
    <scope>FUNCTION</scope>
</reference>
<reference key="7">
    <citation type="journal article" date="1995" name="J. Biol. Chem.">
        <title>Distinct modes of interaction of SHC and insulin receptor substrate-1 with the insulin receptor NPEY region via non-SH2 domains.</title>
        <authorList>
            <person name="He W."/>
            <person name="O'Neill T.J."/>
            <person name="Gustafson T.A."/>
        </authorList>
    </citation>
    <scope>INTERACTION WITH INSR</scope>
</reference>
<reference key="8">
    <citation type="journal article" date="1995" name="Mol. Cell. Biol.">
        <title>Phosphotyrosine-dependent interaction of SHC and insulin receptor substrate 1 with the NPEY motif of the insulin receptor via a novel non-SH2 domain.</title>
        <authorList>
            <person name="Gustafson T.A."/>
            <person name="He W."/>
            <person name="Craparo A."/>
            <person name="Schaub C.D."/>
            <person name="O'Neill T.J."/>
        </authorList>
    </citation>
    <scope>INTERACTION WITH INSR</scope>
</reference>
<reference key="9">
    <citation type="journal article" date="2001" name="Biochem. J.">
        <title>Src homology 3 domain-dependent interaction of Nck-2 with insulin receptor substrate-1.</title>
        <authorList>
            <person name="Tu Y."/>
            <person name="Liang L."/>
            <person name="Frank S.J."/>
            <person name="Wu C."/>
        </authorList>
    </citation>
    <scope>FUNCTION</scope>
    <scope>INTERACTION WITH NCK2</scope>
</reference>
<reference key="10">
    <citation type="journal article" date="2003" name="J. Biol. Chem.">
        <title>Adipose-specific expression, phosphorylation of Ser794 in insulin receptor substrate-1, and activation in diabetic animals of salt-inducible kinase-2.</title>
        <authorList>
            <person name="Horike N."/>
            <person name="Takemori H."/>
            <person name="Katoh Y."/>
            <person name="Doi J."/>
            <person name="Min L."/>
            <person name="Asano T."/>
            <person name="Sun X.J."/>
            <person name="Yamamoto H."/>
            <person name="Kasayama S."/>
            <person name="Muraoka M."/>
            <person name="Nonaka Y."/>
            <person name="Okamoto M."/>
        </authorList>
    </citation>
    <scope>MUTAGENESIS OF SER-794</scope>
    <scope>PHOSPHORYLATION AT SER-794</scope>
</reference>
<reference key="11">
    <citation type="journal article" date="2004" name="J. Biol. Chem.">
        <title>Protein kinase C Theta inhibits insulin signaling by phosphorylating IRS1 at Ser(1101).</title>
        <authorList>
            <person name="Li Y."/>
            <person name="Soos T.J."/>
            <person name="Li X."/>
            <person name="Wu J."/>
            <person name="Degennaro M."/>
            <person name="Sun X."/>
            <person name="Littman D.R."/>
            <person name="Birnbaum M.J."/>
            <person name="Polakiewicz R.D."/>
        </authorList>
    </citation>
    <scope>PHOSPHORYLATION AT SER-1101</scope>
</reference>
<reference key="12">
    <citation type="journal article" date="2004" name="J. Cell Sci.">
        <title>ALK receptor tyrosine kinase promotes cell growth and neurite outgrowth.</title>
        <authorList>
            <person name="Motegi A."/>
            <person name="Fujimoto J."/>
            <person name="Kotani M."/>
            <person name="Sakuraba H."/>
            <person name="Yamamoto T."/>
        </authorList>
    </citation>
    <scope>PHOSPHORYLATION BY ALK</scope>
    <scope>INTERACTION WITH ALK</scope>
</reference>
<reference key="13">
    <citation type="journal article" date="2005" name="J. Clin. Invest.">
        <title>Deletion of SOCS7 leads to enhanced insulin action and enlarged islets of Langerhans.</title>
        <authorList>
            <person name="Banks A.S."/>
            <person name="Li J."/>
            <person name="McKeag L."/>
            <person name="Hribal M.L."/>
            <person name="Kashiwada M."/>
            <person name="Accili D."/>
            <person name="Rothman P.B."/>
        </authorList>
    </citation>
    <scope>INTERACTION WITH SOCS7</scope>
</reference>
<reference key="14">
    <citation type="journal article" date="2005" name="Nat. Biotechnol.">
        <title>Immunoaffinity profiling of tyrosine phosphorylation in cancer cells.</title>
        <authorList>
            <person name="Rush J."/>
            <person name="Moritz A."/>
            <person name="Lee K.A."/>
            <person name="Guo A."/>
            <person name="Goss V.L."/>
            <person name="Spek E.J."/>
            <person name="Zhang H."/>
            <person name="Zha X.-M."/>
            <person name="Polakiewicz R.D."/>
            <person name="Comb M.J."/>
        </authorList>
    </citation>
    <scope>PHOSPHORYLATION [LARGE SCALE ANALYSIS] AT TYR-662</scope>
    <scope>IDENTIFICATION BY MASS SPECTROMETRY [LARGE SCALE ANALYSIS]</scope>
</reference>
<reference key="15">
    <citation type="journal article" date="2006" name="Cell">
        <title>Global, in vivo, and site-specific phosphorylation dynamics in signaling networks.</title>
        <authorList>
            <person name="Olsen J.V."/>
            <person name="Blagoev B."/>
            <person name="Gnad F."/>
            <person name="Macek B."/>
            <person name="Kumar C."/>
            <person name="Mortensen P."/>
            <person name="Mann M."/>
        </authorList>
    </citation>
    <scope>PHOSPHORYLATION [LARGE SCALE ANALYSIS] AT SER-629 AND SER-636</scope>
    <scope>IDENTIFICATION BY MASS SPECTROMETRY [LARGE SCALE ANALYSIS]</scope>
    <source>
        <tissue>Cervix carcinoma</tissue>
    </source>
</reference>
<reference key="16">
    <citation type="journal article" date="2007" name="Oncogene">
        <title>Recruitment of insulin receptor substrate-1 and activation of NF-kappaB essential for midkine growth signaling through anaplastic lymphoma kinase.</title>
        <authorList>
            <person name="Kuo A.H."/>
            <person name="Stoica G.E."/>
            <person name="Riegel A.T."/>
            <person name="Wellstein A."/>
        </authorList>
    </citation>
    <scope>INTERACTION WITH ALK</scope>
    <scope>FUNCTION</scope>
</reference>
<reference key="17">
    <citation type="journal article" date="2008" name="J. Biol. Chem.">
        <title>S6K directly phosphorylates IRS-1 on Ser-270 to promote insulin resistance in response to TNF-(alpha) signaling through IKK2.</title>
        <authorList>
            <person name="Zhang J."/>
            <person name="Gao Z."/>
            <person name="Yin J."/>
            <person name="Quon M.J."/>
            <person name="Ye J."/>
        </authorList>
    </citation>
    <scope>PHOSPHORYLATION AT SER-270; SER-307; SER-636 AND SER-1101</scope>
</reference>
<reference key="18">
    <citation type="journal article" date="2008" name="J. Proteome Res.">
        <title>Combining protein-based IMAC, peptide-based IMAC, and MudPIT for efficient phosphoproteomic analysis.</title>
        <authorList>
            <person name="Cantin G.T."/>
            <person name="Yi W."/>
            <person name="Lu B."/>
            <person name="Park S.K."/>
            <person name="Xu T."/>
            <person name="Lee J.-D."/>
            <person name="Yates J.R. III"/>
        </authorList>
    </citation>
    <scope>IDENTIFICATION BY MASS SPECTROMETRY [LARGE SCALE ANALYSIS]</scope>
    <source>
        <tissue>Cervix carcinoma</tissue>
    </source>
</reference>
<reference key="19">
    <citation type="journal article" date="2008" name="Mol. Cell">
        <title>The CUL7 E3 ubiquitin ligase targets insulin receptor substrate 1 for ubiquitin-dependent degradation.</title>
        <authorList>
            <person name="Xu X."/>
            <person name="Sarikas A."/>
            <person name="Dias-Santagata D.C."/>
            <person name="Dolios G."/>
            <person name="Lafontant P.J."/>
            <person name="Tsai S.C."/>
            <person name="Zhu W."/>
            <person name="Nakajima H."/>
            <person name="Nakajima H.O."/>
            <person name="Field L.J."/>
            <person name="Wang R."/>
            <person name="Pan Z.Q."/>
        </authorList>
    </citation>
    <scope>UBIQUITINATION</scope>
    <scope>PHOSPHORYLATION AT SER-307; SER-312; SER-527 AND SER-636</scope>
    <scope>MUTAGENESIS OF SER-307; SER-312; SER-527; SER-636 AND SER-639</scope>
</reference>
<reference key="20">
    <citation type="journal article" date="2009" name="Mol. Cell. Proteomics">
        <title>Large-scale proteomics analysis of the human kinome.</title>
        <authorList>
            <person name="Oppermann F.S."/>
            <person name="Gnad F."/>
            <person name="Olsen J.V."/>
            <person name="Hornberger R."/>
            <person name="Greff Z."/>
            <person name="Keri G."/>
            <person name="Mann M."/>
            <person name="Daub H."/>
        </authorList>
    </citation>
    <scope>IDENTIFICATION BY MASS SPECTROMETRY [LARGE SCALE ANALYSIS]</scope>
</reference>
<reference key="21">
    <citation type="journal article" date="2009" name="Sci. Signal.">
        <title>Quantitative phosphoproteomic analysis of T cell receptor signaling reveals system-wide modulation of protein-protein interactions.</title>
        <authorList>
            <person name="Mayya V."/>
            <person name="Lundgren D.H."/>
            <person name="Hwang S.-I."/>
            <person name="Rezaul K."/>
            <person name="Wu L."/>
            <person name="Eng J.K."/>
            <person name="Rodionov V."/>
            <person name="Han D.K."/>
        </authorList>
    </citation>
    <scope>PHOSPHORYLATION [LARGE SCALE ANALYSIS] AT SER-348</scope>
    <scope>IDENTIFICATION BY MASS SPECTROMETRY [LARGE SCALE ANALYSIS]</scope>
    <source>
        <tissue>Leukemic T-cell</tissue>
    </source>
</reference>
<reference key="22">
    <citation type="journal article" date="2009" name="Growth Factors">
        <title>Subcellular localization of IRS-1 in IGF-I-mediated chondrogenic proliferation, differentiation and hypertrophy of bone marrow mesenchymal stem cells.</title>
        <authorList>
            <person name="Longobardi L."/>
            <person name="Granero-Molto F."/>
            <person name="O'Rear L."/>
            <person name="Myers T.J."/>
            <person name="Li T."/>
            <person name="Kregor P.J."/>
            <person name="Spagnoli A."/>
        </authorList>
    </citation>
    <scope>FUNCTION</scope>
    <scope>SUBCELLULAR LOCATION</scope>
</reference>
<reference key="23">
    <citation type="journal article" date="2010" name="Mol. Biol. Cell">
        <title>The double-stranded RNA-dependent protein kinase differentially regulates insulin receptor substrates 1 and 2 in HepG2 cells.</title>
        <authorList>
            <person name="Yang X."/>
            <person name="Nath A."/>
            <person name="Opperman M.J."/>
            <person name="Chan C."/>
        </authorList>
    </citation>
    <scope>PHOSPHORYLATION AT SER-312 AND TYR-941</scope>
</reference>
<reference key="24">
    <citation type="journal article" date="2013" name="Mol. Cell. Biol.">
        <title>C1-Ten is a protein tyrosine phosphatase of insulin receptor substrate 1 (IRS-1), regulating IRS-1 stability and muscle atrophy.</title>
        <authorList>
            <person name="Koh A."/>
            <person name="Lee M.N."/>
            <person name="Yang Y.R."/>
            <person name="Jeong H."/>
            <person name="Ghim J."/>
            <person name="Noh J."/>
            <person name="Kim J."/>
            <person name="Ryu D."/>
            <person name="Park S."/>
            <person name="Song P."/>
            <person name="Koo S.H."/>
            <person name="Leslie N.R."/>
            <person name="Berggren P.O."/>
            <person name="Choi J.H."/>
            <person name="Suh P.G."/>
            <person name="Ryu S.H."/>
        </authorList>
    </citation>
    <scope>PHOSPHORYLATION AT TYR-612; TYR-632 AND TYR-896</scope>
    <scope>MUTAGENESIS OF TYR-612 AND TYR-632</scope>
</reference>
<reference key="25">
    <citation type="journal article" date="2014" name="J. Biol. Chem.">
        <title>Insulin receptor substrate 1/2 (IRS1/2) regulates Wnt/beta-catenin signaling through blocking autophagic degradation of dishevelled2.</title>
        <authorList>
            <person name="Geng Y."/>
            <person name="Ju Y."/>
            <person name="Ren F."/>
            <person name="Qiu Y."/>
            <person name="Tomita Y."/>
            <person name="Tomoeda M."/>
            <person name="Kishida M."/>
            <person name="Wang Y."/>
            <person name="Jin L."/>
            <person name="Su F."/>
            <person name="Wei C."/>
            <person name="Jia B."/>
            <person name="Li Y."/>
            <person name="Chang Z."/>
        </authorList>
    </citation>
    <scope>FUNCTION</scope>
    <scope>SUBCELLULAR LOCATION</scope>
    <scope>INTERACTION WITH DVL2</scope>
</reference>
<reference key="26">
    <citation type="journal article" date="2014" name="Cell. Signal.">
        <title>Regulation of C1-Ten protein tyrosine phosphatase by p62/SQSTM1-mediated sequestration and degradation.</title>
        <authorList>
            <person name="Koh A."/>
            <person name="Park D."/>
            <person name="Jeong H."/>
            <person name="Lee J."/>
            <person name="Lee M.N."/>
            <person name="Suh P.G."/>
            <person name="Ryu S.H."/>
        </authorList>
    </citation>
    <scope>INTERACTION WITH SQSTM1</scope>
</reference>
<reference key="27">
    <citation type="journal article" date="2014" name="J. Proteomics">
        <title>An enzyme assisted RP-RPLC approach for in-depth analysis of human liver phosphoproteome.</title>
        <authorList>
            <person name="Bian Y."/>
            <person name="Song C."/>
            <person name="Cheng K."/>
            <person name="Dong M."/>
            <person name="Wang F."/>
            <person name="Huang J."/>
            <person name="Sun D."/>
            <person name="Wang L."/>
            <person name="Ye M."/>
            <person name="Zou H."/>
        </authorList>
    </citation>
    <scope>PHOSPHORYLATION [LARGE SCALE ANALYSIS] AT SER-323; THR-453; SER-527 AND SER-629</scope>
    <scope>IDENTIFICATION BY MASS SPECTROMETRY [LARGE SCALE ANALYSIS]</scope>
    <source>
        <tissue>Liver</tissue>
    </source>
</reference>
<reference key="28">
    <citation type="journal article" date="2018" name="Cell. Signal.">
        <title>Cellular phosphatase activity of C1-Ten/Tensin2 is controlled by Phosphatidylinositol-3,4,5-triphosphate binding through the C1-Ten/Tensin2 SH2 domain.</title>
        <authorList>
            <person name="Kim E."/>
            <person name="Kim D.H."/>
            <person name="Singaram I."/>
            <person name="Jeong H."/>
            <person name="Koh A."/>
            <person name="Lee J."/>
            <person name="Cho W."/>
            <person name="Ryu S.H."/>
        </authorList>
    </citation>
    <scope>PHOSPHORYLATION AT TYR-612</scope>
</reference>
<reference key="29">
    <citation type="journal article" date="2021" name="J. Biol. Chem.">
        <title>The E3 ligase TRAF4 Promotes IGF Signaling by Mediating Atypical Ubiquitination of IRS-1.</title>
        <authorList>
            <person name="Yu W."/>
            <person name="Singh R."/>
            <person name="Wang Z."/>
            <person name="O'Malley B.W."/>
            <person name="Yi P."/>
        </authorList>
    </citation>
    <scope>FUNCTION</scope>
    <scope>UBIQUITINATION AT LYS-1186 AND LYS-1189</scope>
    <scope>MUTAGENESIS OF LYS-1186 AND LYS-1189</scope>
    <scope>INTERACTION WITH IGFR1</scope>
</reference>
<reference key="30">
    <citation type="journal article" date="2023" name="Cell">
        <title>An enzyme that selectively S-nitrosylates proteins to regulate insulin signaling.</title>
        <authorList>
            <person name="Zhou H.L."/>
            <person name="Grimmett Z.W."/>
            <person name="Venetos N.M."/>
            <person name="Stomberski C.T."/>
            <person name="Qian Z."/>
            <person name="McLaughlin P.J."/>
            <person name="Bansal P.K."/>
            <person name="Zhang R."/>
            <person name="Reynolds J.D."/>
            <person name="Premont R.T."/>
            <person name="Stamler J.S."/>
        </authorList>
    </citation>
    <scope>S-NITROSYLATION</scope>
</reference>
<reference key="31">
    <citation type="journal article" date="2024" name="Proc. Natl. Acad. Sci. U.S.A.">
        <title>The serine phosphorylations in the IRS-1 PIR domain abrogate IRS-1 and IR interaction.</title>
        <authorList>
            <person name="Woo J.R."/>
            <person name="Bae S.H."/>
            <person name="Wales T.E."/>
            <person name="Engen J.R."/>
            <person name="Lee J."/>
            <person name="Jang H."/>
            <person name="Park S."/>
        </authorList>
    </citation>
    <scope>FUNCTION</scope>
    <scope>PHOSPHORYLATION AT SER-307; SER-312; SER-315 AND SER-323</scope>
    <scope>INTERACTION WITH INSR</scope>
</reference>
<reference key="32">
    <citation type="journal article" date="1996" name="Nat. Struct. Biol.">
        <title>Structural basis for IL-4 receptor phosphopeptide recognition by the IRS-1 PTB domain.</title>
        <authorList>
            <person name="Zhou M.-M."/>
            <person name="Huang B."/>
            <person name="Olejniczak E.T."/>
            <person name="Meadows R.P."/>
            <person name="Shuker S.B."/>
            <person name="Miyazaki M."/>
            <person name="Trueb T."/>
            <person name="Shoelson S.E."/>
            <person name="Fesik S.W."/>
        </authorList>
    </citation>
    <scope>STRUCTURE BY NMR OF 157-267</scope>
</reference>
<reference key="33">
    <citation type="journal article" date="1999" name="Proc. Natl. Acad. Sci. U.S.A.">
        <title>Crystal structure of the pleckstrin homology-phosphotyrosine binding (PH-PTB) targeting region of insulin receptor substrate 1.</title>
        <authorList>
            <person name="Dhe-Paganon S."/>
            <person name="Ottinger E.A."/>
            <person name="Nolte R.T."/>
            <person name="Eck M.J."/>
            <person name="Shoelson S.E."/>
        </authorList>
    </citation>
    <scope>X-RAY CRYSTALLOGRAPHY (2.3 ANGSTROMS) OF 4-267</scope>
</reference>
<reference key="34">
    <citation type="journal article" date="2001" name="Nat. Struct. Biol.">
        <title>Structure and autoregulation of the insulin-like growth factor 1 receptor kinase.</title>
        <authorList>
            <person name="Favelyukis S."/>
            <person name="Till J.H."/>
            <person name="Hubbard S.R."/>
            <person name="Miller W.T."/>
        </authorList>
    </citation>
    <scope>X-RAY CRYSTALLOGRAPHY (2.1 ANGSTROMS) OF 889-902 IN COMPLEX WITH IGF1R</scope>
</reference>
<reference key="35">
    <citation type="journal article" date="1993" name="Lancet">
        <title>Aminoacid polymorphisms of insulin receptor substrate-1 in non-insulin-dependent diabetes mellitus.</title>
        <authorList>
            <person name="Almind K."/>
            <person name="Bjoerbaek C."/>
            <person name="Vestergaard H."/>
            <person name="Hansen T."/>
            <person name="Echwald S."/>
            <person name="Pedersen O."/>
        </authorList>
    </citation>
    <scope>VARIANTS PRO-512 AND ARG-971</scope>
</reference>
<reference key="36">
    <citation type="journal article" date="1996" name="Hum. Mutat.">
        <title>Deletion of Gly723 in the insulin receptor substrate-1 of a patient with noninsulin-dependent diabetes mellitus.</title>
        <authorList>
            <person name="Esposito D.L."/>
            <person name="Mammarella S."/>
            <person name="Ranieri A."/>
            <person name="della Loggia F."/>
            <person name="Capani F."/>
            <person name="Consoli A."/>
            <person name="Mariani-Costantini R."/>
            <person name="Caramia F.G."/>
            <person name="Cama A."/>
            <person name="Battista P."/>
        </authorList>
    </citation>
    <scope>VARIANT T2D GLY-723 DEL</scope>
</reference>
<reference key="37">
    <citation type="journal article" date="1998" name="Hum. Mutat.">
        <title>Novel allele of the insulin receptor substrate-1 bearing two non-conservative amino acid substitutions in a patient with noninsulin-dependent diabetes mellitus.</title>
        <authorList>
            <person name="Mammarella S."/>
            <person name="Creati B."/>
            <person name="Esposito D.L."/>
            <person name="Arcuri P."/>
            <person name="della Loggia F."/>
            <person name="Capani F."/>
            <person name="Mariani-Costantini R."/>
            <person name="Caramia F.G."/>
            <person name="Battista P."/>
            <person name="Cama A."/>
        </authorList>
    </citation>
    <scope>VARIANTS T2D TYR-1043 AND TYR-1095</scope>
</reference>
<reference key="38">
    <citation type="journal article" date="2000" name="J. Clin. Endocrinol. Metab.">
        <title>The Gly--&gt;Arg(972) amino acid polymorphism in insulin receptor substrate-1 affects glucose metabolism in skeletal muscle cells.</title>
        <authorList>
            <person name="Hribal M.L."/>
            <person name="Federici M."/>
            <person name="Porzio O."/>
            <person name="Lauro D."/>
            <person name="Borboni P."/>
            <person name="Accili D."/>
            <person name="Lauro R."/>
            <person name="Sesti G."/>
        </authorList>
    </citation>
    <scope>CHARACTERIZATION OF VARIANT ARG-971</scope>
</reference>
<reference key="39">
    <citation type="journal article" date="2003" name="J. Clin. Endocrinol. Metab.">
        <title>The Arg(972) variant in insulin receptor substrate-1 is associated with an atherogenic profile in offspring of type 2 diabetic patients.</title>
        <authorList>
            <person name="Marini M.A."/>
            <person name="Frontoni S."/>
            <person name="Mineo D."/>
            <person name="Bracaglia D."/>
            <person name="Cardellini M."/>
            <person name="De Nicolais P."/>
            <person name="Baroni A."/>
            <person name="D'Alfonso R."/>
            <person name="Perna M."/>
            <person name="Lauro D."/>
            <person name="Federici M."/>
            <person name="Gambardella S."/>
            <person name="Lauro R."/>
            <person name="Sesti G."/>
        </authorList>
    </citation>
    <scope>VARIANT ARG-971</scope>
</reference>
<reference key="40">
    <citation type="journal article" date="2003" name="J. Clin. Endocrinol. Metab.">
        <title>Genetic polymorphism PC-1 K121Q and ethnic susceptibility to insulin resistance.</title>
        <authorList>
            <person name="Abate N."/>
            <person name="Carulli L."/>
            <person name="Cabo-Chan A. Jr."/>
            <person name="Chandalia M."/>
            <person name="Snell P.G."/>
            <person name="Grundy S.M."/>
        </authorList>
    </citation>
    <scope>VARIANT ARG-971</scope>
</reference>
<reference key="41">
    <citation type="journal article" date="2003" name="J. Clin. Endocrinol. Metab.">
        <title>A novel T608R missense mutation in insulin receptor substrate-1 identified in a subject with type 2 diabetes impairs metabolic insulin signaling.</title>
        <authorList>
            <person name="Esposito D.L."/>
            <person name="Li Y."/>
            <person name="Vanni C."/>
            <person name="Mammarella S."/>
            <person name="Veschi S."/>
            <person name="Della Loggia F."/>
            <person name="Mariani-Costantini R."/>
            <person name="Battista P."/>
            <person name="Quon M.J."/>
            <person name="Cama A."/>
        </authorList>
    </citation>
    <scope>VARIANT ARG-608</scope>
    <scope>CHARACTERIZATION OF VARIANT ARG-608</scope>
</reference>
<reference key="42">
    <citation type="journal article" date="2004" name="Circulation">
        <title>G972R IRS-1 variant impairs insulin regulation of endothelial nitric oxide synthase in cultured human endothelial cells.</title>
        <authorList>
            <person name="Federici M."/>
            <person name="Pandolfi A."/>
            <person name="De Filippis E.A."/>
            <person name="Pellegrini G."/>
            <person name="Menghini R."/>
            <person name="Lauro D."/>
            <person name="Cardellini M."/>
            <person name="Romano M."/>
            <person name="Sesti G."/>
            <person name="Lauro R."/>
            <person name="Consoli A."/>
        </authorList>
    </citation>
    <scope>VARIANT ARG-971</scope>
    <scope>ASSOCIATION WITH ENDOTHELIAL DYSFUNCTION</scope>
    <scope>CARDIOVASCULAR DISEASE</scope>
</reference>
<reference key="43">
    <citation type="journal article" date="2005" name="J. Biol. Chem.">
        <title>Human insulin receptor substrate-1 (IRS-1) polymorphism G972R causes IRS-1 to associate with the insulin receptor and inhibit receptor autophosphorylation.</title>
        <authorList>
            <person name="McGettrick A.J."/>
            <person name="Feener E.P."/>
            <person name="Kahn C.R."/>
        </authorList>
    </citation>
    <scope>VARIANT ARG-971</scope>
    <scope>MOLECULAR MECHANISM OF LINKAGE TO T2D</scope>
</reference>
<sequence>MASPPESDGFSDVRKVGYLRKPKSMHKRFFVLRAASEAGGPARLEYYENEKKWRHKSSAPKRSIPLESCFNINKRADSKNKHLVALYTRDEHFAIAADSEAEQDSWYQALLQLHNRAKGHHDGAAALGAGGGGGSCSGSSGLGEAGEDLSYGDVPPGPAFKEVWQVILKPKGLGQTKNLIGIYRLCLTSKTISFVKLNSEAAAVVLQLMNIRRCGHSENFFFIEVGRSAVTGPGEFWMQVDDSVVAQNMHETILEAMRAMSDEFRPRSKSQSSSNCSNPISVPLRRHHLNNPPPSQVGLTRRSRTESITATSPASMVGGKPGSFRVRASSDGEGTMSRPASVDGSPVSPSTNRTHAHRHRGSARLHPPLNHSRSIPMPASRCSPSATSPVSLSSSSTSGHGSTSDCLFPRRSSASVSGSPSDGGFISSDEYGSSPCDFRSSFRSVTPDSLGHTPPARGEEELSNYICMGGKGPSTLTAPNGHYILSRGGNGHRCTPGTGLGTSPALAGDEAASAADLDNRFRKRTHSAGTSPTITHQKTPSQSSVASIEEYTEMMPAYPPGGGSGGRLPGHRHSAFVPTRSYPEEGLEMHPLERRGGHHRPDSSTLHTDDGYMPMSPGVAPVPSGRKGSGDYMPMSPKSVSAPQQIINPIRRHPQRVDPNGYMMMSPSGGCSPDIGGGPSSSSSSSNAVPSGTSYGKLWTNGVGGHHSHVLPHPKPPVESSGGKLLPCTGDYMNMSPVGDSNTSSPSDCYYGPEDPQHKPVLSYYSLPRSFKHTQRPGEPEEGARHQHLRLSTSSGRLLYAATADDSSSSTSSDSLGGGYCGARLEPSLPHPHHQVLQPHLPRKVDTAAQTNSRLARPTRLSLGDPKASTLPRAREQQQQQQPLLHPPEPKSPGEYVNIEFGSDQSGYLSGPVAFHSSPSVRCPSQLQPAPREEETGTEEYMKMDLGPGRRAAWQESTGVEMGRLGPAPPGAASICRPTRAVPSSRGDYMTMQMSCPRQSYVDTSPAAPVSYADMRTGIAAEEVSLPRATMAAASSSSAASASPTGPQGAAELAAHSSLLGGPQGPGGMSAFTRVNLSPNRNQSAKVIRADPQGCRRRHSSETFSSTPSATRVGNTVPFGAGAAVGGGGGSSSSSEDVKRHSSASFENVWLRPGELGGAPKEPAKLCGAAGGLENGLNYIDLDLVKDFKQCPQECTPEPQPPPPPPPHQPLGSGESSSTRRSSEDLSAYASISFQKQPEDRQ</sequence>
<gene>
    <name type="primary">IRS1</name>
</gene>
<dbReference type="EMBL" id="S85963">
    <property type="protein sequence ID" value="AAB21608.1"/>
    <property type="molecule type" value="Genomic_DNA"/>
</dbReference>
<dbReference type="EMBL" id="S62539">
    <property type="protein sequence ID" value="AAB27175.1"/>
    <property type="molecule type" value="mRNA"/>
</dbReference>
<dbReference type="EMBL" id="BC053895">
    <property type="protein sequence ID" value="AAH53895.1"/>
    <property type="molecule type" value="mRNA"/>
</dbReference>
<dbReference type="CCDS" id="CCDS2463.1"/>
<dbReference type="PIR" id="I53160">
    <property type="entry name" value="JS0670"/>
</dbReference>
<dbReference type="RefSeq" id="NP_005535.1">
    <property type="nucleotide sequence ID" value="NM_005544.3"/>
</dbReference>
<dbReference type="RefSeq" id="XP_047300179.1">
    <property type="nucleotide sequence ID" value="XM_047444223.1"/>
</dbReference>
<dbReference type="RefSeq" id="XP_047300180.1">
    <property type="nucleotide sequence ID" value="XM_047444224.1"/>
</dbReference>
<dbReference type="RefSeq" id="XP_054197850.1">
    <property type="nucleotide sequence ID" value="XM_054341875.1"/>
</dbReference>
<dbReference type="PDB" id="1IRS">
    <property type="method" value="NMR"/>
    <property type="chains" value="A=157-267"/>
</dbReference>
<dbReference type="PDB" id="1K3A">
    <property type="method" value="X-ray"/>
    <property type="resolution" value="2.10 A"/>
    <property type="chains" value="B=891-902"/>
</dbReference>
<dbReference type="PDB" id="1QQG">
    <property type="method" value="X-ray"/>
    <property type="resolution" value="2.30 A"/>
    <property type="chains" value="A/B=4-267"/>
</dbReference>
<dbReference type="PDB" id="2Z8C">
    <property type="method" value="X-ray"/>
    <property type="resolution" value="3.25 A"/>
    <property type="chains" value="B=731-736"/>
</dbReference>
<dbReference type="PDB" id="5U1M">
    <property type="method" value="X-ray"/>
    <property type="resolution" value="1.80 A"/>
    <property type="chains" value="A=161-265"/>
</dbReference>
<dbReference type="PDB" id="6BNT">
    <property type="method" value="X-ray"/>
    <property type="resolution" value="3.20 A"/>
    <property type="chains" value="B=607-620"/>
</dbReference>
<dbReference type="PDB" id="7PPL">
    <property type="method" value="X-ray"/>
    <property type="resolution" value="1.53 A"/>
    <property type="chains" value="B=625-639"/>
</dbReference>
<dbReference type="PDB" id="7PPM">
    <property type="method" value="X-ray"/>
    <property type="resolution" value="1.48 A"/>
    <property type="chains" value="B=889-901"/>
</dbReference>
<dbReference type="PDBsum" id="1IRS"/>
<dbReference type="PDBsum" id="1K3A"/>
<dbReference type="PDBsum" id="1QQG"/>
<dbReference type="PDBsum" id="2Z8C"/>
<dbReference type="PDBsum" id="5U1M"/>
<dbReference type="PDBsum" id="6BNT"/>
<dbReference type="PDBsum" id="7PPL"/>
<dbReference type="PDBsum" id="7PPM"/>
<dbReference type="BMRB" id="P35568"/>
<dbReference type="SMR" id="P35568"/>
<dbReference type="BioGRID" id="109874">
    <property type="interactions" value="118"/>
</dbReference>
<dbReference type="CORUM" id="P35568"/>
<dbReference type="DIP" id="DIP-523N"/>
<dbReference type="ELM" id="P35568"/>
<dbReference type="FunCoup" id="P35568">
    <property type="interactions" value="2050"/>
</dbReference>
<dbReference type="IntAct" id="P35568">
    <property type="interactions" value="37"/>
</dbReference>
<dbReference type="MINT" id="P35568"/>
<dbReference type="STRING" id="9606.ENSP00000304895"/>
<dbReference type="BindingDB" id="P35568"/>
<dbReference type="ChEMBL" id="CHEMBL4523219"/>
<dbReference type="DrugBank" id="DB08513">
    <property type="generic name" value="[4-({5-(AMINOCARBONYL)-4-[(3-METHYLPHENYL)AMINO]PYRIMIDIN-2-YL}AMINO)PHENYL]ACETIC ACID"/>
</dbReference>
<dbReference type="DrugBank" id="DB17490">
    <property type="generic name" value="NT-219"/>
</dbReference>
<dbReference type="GlyGen" id="P35568">
    <property type="glycosylation" value="7 sites, 1 O-linked glycan (4 sites)"/>
</dbReference>
<dbReference type="iPTMnet" id="P35568"/>
<dbReference type="PhosphoSitePlus" id="P35568"/>
<dbReference type="BioMuta" id="IRS1"/>
<dbReference type="DMDM" id="547738"/>
<dbReference type="jPOST" id="P35568"/>
<dbReference type="MassIVE" id="P35568"/>
<dbReference type="PaxDb" id="9606-ENSP00000304895"/>
<dbReference type="PeptideAtlas" id="P35568"/>
<dbReference type="ProteomicsDB" id="55088"/>
<dbReference type="Pumba" id="P35568"/>
<dbReference type="Antibodypedia" id="3935">
    <property type="antibodies" value="2543 antibodies from 48 providers"/>
</dbReference>
<dbReference type="DNASU" id="3667"/>
<dbReference type="Ensembl" id="ENST00000305123.6">
    <property type="protein sequence ID" value="ENSP00000304895.4"/>
    <property type="gene ID" value="ENSG00000169047.6"/>
</dbReference>
<dbReference type="GeneID" id="3667"/>
<dbReference type="KEGG" id="hsa:3667"/>
<dbReference type="MANE-Select" id="ENST00000305123.6">
    <property type="protein sequence ID" value="ENSP00000304895.4"/>
    <property type="RefSeq nucleotide sequence ID" value="NM_005544.3"/>
    <property type="RefSeq protein sequence ID" value="NP_005535.1"/>
</dbReference>
<dbReference type="UCSC" id="uc002voh.5">
    <property type="organism name" value="human"/>
</dbReference>
<dbReference type="AGR" id="HGNC:6125"/>
<dbReference type="CTD" id="3667"/>
<dbReference type="DisGeNET" id="3667"/>
<dbReference type="GeneCards" id="IRS1"/>
<dbReference type="HGNC" id="HGNC:6125">
    <property type="gene designation" value="IRS1"/>
</dbReference>
<dbReference type="HPA" id="ENSG00000169047">
    <property type="expression patterns" value="Low tissue specificity"/>
</dbReference>
<dbReference type="MalaCards" id="IRS1"/>
<dbReference type="MIM" id="125853">
    <property type="type" value="phenotype"/>
</dbReference>
<dbReference type="MIM" id="147545">
    <property type="type" value="gene"/>
</dbReference>
<dbReference type="neXtProt" id="NX_P35568"/>
<dbReference type="OpenTargets" id="ENSG00000169047"/>
<dbReference type="PharmGKB" id="PA203"/>
<dbReference type="VEuPathDB" id="HostDB:ENSG00000169047"/>
<dbReference type="eggNOG" id="ENOG502QUNU">
    <property type="taxonomic scope" value="Eukaryota"/>
</dbReference>
<dbReference type="GeneTree" id="ENSGT00940000161579"/>
<dbReference type="HOGENOM" id="CLU_004902_2_0_1"/>
<dbReference type="InParanoid" id="P35568"/>
<dbReference type="OMA" id="MTMQMGC"/>
<dbReference type="OrthoDB" id="946068at2759"/>
<dbReference type="PAN-GO" id="P35568">
    <property type="GO annotations" value="5 GO annotations based on evolutionary models"/>
</dbReference>
<dbReference type="PhylomeDB" id="P35568"/>
<dbReference type="TreeFam" id="TF325994"/>
<dbReference type="PathwayCommons" id="P35568"/>
<dbReference type="Reactome" id="R-HSA-109704">
    <property type="pathway name" value="PI3K Cascade"/>
</dbReference>
<dbReference type="Reactome" id="R-HSA-112399">
    <property type="pathway name" value="IRS-mediated signalling"/>
</dbReference>
<dbReference type="Reactome" id="R-HSA-112412">
    <property type="pathway name" value="SOS-mediated signalling"/>
</dbReference>
<dbReference type="Reactome" id="R-HSA-1257604">
    <property type="pathway name" value="PIP3 activates AKT signaling"/>
</dbReference>
<dbReference type="Reactome" id="R-HSA-1266695">
    <property type="pathway name" value="Interleukin-7 signaling"/>
</dbReference>
<dbReference type="Reactome" id="R-HSA-198203">
    <property type="pathway name" value="PI3K/AKT activation"/>
</dbReference>
<dbReference type="Reactome" id="R-HSA-201556">
    <property type="pathway name" value="Signaling by ALK"/>
</dbReference>
<dbReference type="Reactome" id="R-HSA-2219530">
    <property type="pathway name" value="Constitutive Signaling by Aberrant PI3K in Cancer"/>
</dbReference>
<dbReference type="Reactome" id="R-HSA-2428928">
    <property type="pathway name" value="IRS-related events triggered by IGF1R"/>
</dbReference>
<dbReference type="Reactome" id="R-HSA-2586552">
    <property type="pathway name" value="Signaling by Leptin"/>
</dbReference>
<dbReference type="Reactome" id="R-HSA-5673001">
    <property type="pathway name" value="RAF/MAP kinase cascade"/>
</dbReference>
<dbReference type="Reactome" id="R-HSA-6811558">
    <property type="pathway name" value="PI5P, PP2A and IER3 Regulate PI3K/AKT Signaling"/>
</dbReference>
<dbReference type="Reactome" id="R-HSA-74713">
    <property type="pathway name" value="IRS activation"/>
</dbReference>
<dbReference type="Reactome" id="R-HSA-74749">
    <property type="pathway name" value="Signal attenuation"/>
</dbReference>
<dbReference type="Reactome" id="R-HSA-9603381">
    <property type="pathway name" value="Activated NTRK3 signals through PI3K"/>
</dbReference>
<dbReference type="Reactome" id="R-HSA-9725370">
    <property type="pathway name" value="Signaling by ALK fusions and activated point mutants"/>
</dbReference>
<dbReference type="Reactome" id="R-HSA-982772">
    <property type="pathway name" value="Growth hormone receptor signaling"/>
</dbReference>
<dbReference type="Reactome" id="R-HSA-9842663">
    <property type="pathway name" value="Signaling by LTK"/>
</dbReference>
<dbReference type="SignaLink" id="P35568"/>
<dbReference type="SIGNOR" id="P35568"/>
<dbReference type="BioGRID-ORCS" id="3667">
    <property type="hits" value="39 hits in 1175 CRISPR screens"/>
</dbReference>
<dbReference type="CD-CODE" id="1041FAE8">
    <property type="entry name" value="Insulin/IGF-1 signalosomes"/>
</dbReference>
<dbReference type="ChiTaRS" id="IRS1">
    <property type="organism name" value="human"/>
</dbReference>
<dbReference type="EvolutionaryTrace" id="P35568"/>
<dbReference type="GeneWiki" id="IRS1"/>
<dbReference type="GenomeRNAi" id="3667"/>
<dbReference type="Pharos" id="P35568">
    <property type="development level" value="Tchem"/>
</dbReference>
<dbReference type="PRO" id="PR:P35568"/>
<dbReference type="Proteomes" id="UP000005640">
    <property type="component" value="Chromosome 2"/>
</dbReference>
<dbReference type="RNAct" id="P35568">
    <property type="molecule type" value="protein"/>
</dbReference>
<dbReference type="Bgee" id="ENSG00000169047">
    <property type="expression patterns" value="Expressed in endometrium epithelium and 206 other cell types or tissues"/>
</dbReference>
<dbReference type="GO" id="GO:0005901">
    <property type="term" value="C:caveola"/>
    <property type="evidence" value="ECO:0000314"/>
    <property type="project" value="BHF-UCL"/>
</dbReference>
<dbReference type="GO" id="GO:0005737">
    <property type="term" value="C:cytoplasm"/>
    <property type="evidence" value="ECO:0000250"/>
    <property type="project" value="UniProtKB"/>
</dbReference>
<dbReference type="GO" id="GO:0005829">
    <property type="term" value="C:cytosol"/>
    <property type="evidence" value="ECO:0000314"/>
    <property type="project" value="HPA"/>
</dbReference>
<dbReference type="GO" id="GO:0005899">
    <property type="term" value="C:insulin receptor complex"/>
    <property type="evidence" value="ECO:0000250"/>
    <property type="project" value="BHF-UCL"/>
</dbReference>
<dbReference type="GO" id="GO:0043231">
    <property type="term" value="C:intracellular membrane-bounded organelle"/>
    <property type="evidence" value="ECO:0000314"/>
    <property type="project" value="HPA"/>
</dbReference>
<dbReference type="GO" id="GO:0005654">
    <property type="term" value="C:nucleoplasm"/>
    <property type="evidence" value="ECO:0000314"/>
    <property type="project" value="HPA"/>
</dbReference>
<dbReference type="GO" id="GO:0005634">
    <property type="term" value="C:nucleus"/>
    <property type="evidence" value="ECO:0000250"/>
    <property type="project" value="UniProtKB"/>
</dbReference>
<dbReference type="GO" id="GO:0005886">
    <property type="term" value="C:plasma membrane"/>
    <property type="evidence" value="ECO:0000314"/>
    <property type="project" value="HPA"/>
</dbReference>
<dbReference type="GO" id="GO:0005158">
    <property type="term" value="F:insulin receptor binding"/>
    <property type="evidence" value="ECO:0000353"/>
    <property type="project" value="UniProtKB"/>
</dbReference>
<dbReference type="GO" id="GO:0005159">
    <property type="term" value="F:insulin-like growth factor receptor binding"/>
    <property type="evidence" value="ECO:0000353"/>
    <property type="project" value="UniProtKB"/>
</dbReference>
<dbReference type="GO" id="GO:0043548">
    <property type="term" value="F:phosphatidylinositol 3-kinase binding"/>
    <property type="evidence" value="ECO:0000353"/>
    <property type="project" value="UniProtKB"/>
</dbReference>
<dbReference type="GO" id="GO:0001784">
    <property type="term" value="F:phosphotyrosine residue binding"/>
    <property type="evidence" value="ECO:0000353"/>
    <property type="project" value="CAFA"/>
</dbReference>
<dbReference type="GO" id="GO:0005080">
    <property type="term" value="F:protein kinase C binding"/>
    <property type="evidence" value="ECO:0000250"/>
    <property type="project" value="BHF-UCL"/>
</dbReference>
<dbReference type="GO" id="GO:0042169">
    <property type="term" value="F:SH2 domain binding"/>
    <property type="evidence" value="ECO:0000250"/>
    <property type="project" value="UniProtKB"/>
</dbReference>
<dbReference type="GO" id="GO:0035591">
    <property type="term" value="F:signaling adaptor activity"/>
    <property type="evidence" value="ECO:0000314"/>
    <property type="project" value="UniProt"/>
</dbReference>
<dbReference type="GO" id="GO:0030159">
    <property type="term" value="F:signaling receptor complex adaptor activity"/>
    <property type="evidence" value="ECO:0000314"/>
    <property type="project" value="BHF-UCL"/>
</dbReference>
<dbReference type="GO" id="GO:0005068">
    <property type="term" value="F:transmembrane receptor protein tyrosine kinase adaptor activity"/>
    <property type="evidence" value="ECO:0000250"/>
    <property type="project" value="BHF-UCL"/>
</dbReference>
<dbReference type="GO" id="GO:0071398">
    <property type="term" value="P:cellular response to fatty acid"/>
    <property type="evidence" value="ECO:0000250"/>
    <property type="project" value="ARUK-UCL"/>
</dbReference>
<dbReference type="GO" id="GO:0032869">
    <property type="term" value="P:cellular response to insulin stimulus"/>
    <property type="evidence" value="ECO:0000315"/>
    <property type="project" value="BHF-UCL"/>
</dbReference>
<dbReference type="GO" id="GO:0019221">
    <property type="term" value="P:cytokine-mediated signaling pathway"/>
    <property type="evidence" value="ECO:0000316"/>
    <property type="project" value="BHF-UCL"/>
</dbReference>
<dbReference type="GO" id="GO:0042593">
    <property type="term" value="P:glucose homeostasis"/>
    <property type="evidence" value="ECO:0000304"/>
    <property type="project" value="BHF-UCL"/>
</dbReference>
<dbReference type="GO" id="GO:0008286">
    <property type="term" value="P:insulin receptor signaling pathway"/>
    <property type="evidence" value="ECO:0000314"/>
    <property type="project" value="UniProtKB"/>
</dbReference>
<dbReference type="GO" id="GO:0048009">
    <property type="term" value="P:insulin-like growth factor receptor signaling pathway"/>
    <property type="evidence" value="ECO:0000353"/>
    <property type="project" value="UniProtKB"/>
</dbReference>
<dbReference type="GO" id="GO:0046627">
    <property type="term" value="P:negative regulation of insulin receptor signaling pathway"/>
    <property type="evidence" value="ECO:0000250"/>
    <property type="project" value="BHF-UCL"/>
</dbReference>
<dbReference type="GO" id="GO:0046676">
    <property type="term" value="P:negative regulation of insulin secretion"/>
    <property type="evidence" value="ECO:0000314"/>
    <property type="project" value="BHF-UCL"/>
</dbReference>
<dbReference type="GO" id="GO:0043491">
    <property type="term" value="P:phosphatidylinositol 3-kinase/protein kinase B signal transduction"/>
    <property type="evidence" value="ECO:0000314"/>
    <property type="project" value="BHF-UCL"/>
</dbReference>
<dbReference type="GO" id="GO:0008284">
    <property type="term" value="P:positive regulation of cell population proliferation"/>
    <property type="evidence" value="ECO:0000303"/>
    <property type="project" value="BHF-UCL"/>
</dbReference>
<dbReference type="GO" id="GO:0046326">
    <property type="term" value="P:positive regulation of D-glucose import"/>
    <property type="evidence" value="ECO:0000314"/>
    <property type="project" value="BHF-UCL"/>
</dbReference>
<dbReference type="GO" id="GO:0032000">
    <property type="term" value="P:positive regulation of fatty acid beta-oxidation"/>
    <property type="evidence" value="ECO:0000315"/>
    <property type="project" value="BHF-UCL"/>
</dbReference>
<dbReference type="GO" id="GO:0010907">
    <property type="term" value="P:positive regulation of glucose metabolic process"/>
    <property type="evidence" value="ECO:0000315"/>
    <property type="project" value="BHF-UCL"/>
</dbReference>
<dbReference type="GO" id="GO:0045725">
    <property type="term" value="P:positive regulation of glycogen biosynthetic process"/>
    <property type="evidence" value="ECO:0000315"/>
    <property type="project" value="BHF-UCL"/>
</dbReference>
<dbReference type="GO" id="GO:0046628">
    <property type="term" value="P:positive regulation of insulin receptor signaling pathway"/>
    <property type="evidence" value="ECO:0000314"/>
    <property type="project" value="BHF-UCL"/>
</dbReference>
<dbReference type="GO" id="GO:0051897">
    <property type="term" value="P:positive regulation of phosphatidylinositol 3-kinase/protein kinase B signal transduction"/>
    <property type="evidence" value="ECO:0000250"/>
    <property type="project" value="BHF-UCL"/>
</dbReference>
<dbReference type="GO" id="GO:0032868">
    <property type="term" value="P:response to insulin"/>
    <property type="evidence" value="ECO:0000314"/>
    <property type="project" value="BHF-UCL"/>
</dbReference>
<dbReference type="GO" id="GO:0007165">
    <property type="term" value="P:signal transduction"/>
    <property type="evidence" value="ECO:0000304"/>
    <property type="project" value="ProtInc"/>
</dbReference>
<dbReference type="CDD" id="cd01257">
    <property type="entry name" value="PH_IRS"/>
    <property type="match status" value="1"/>
</dbReference>
<dbReference type="CDD" id="cd01204">
    <property type="entry name" value="PTB_IRS"/>
    <property type="match status" value="1"/>
</dbReference>
<dbReference type="DisProt" id="DP02418"/>
<dbReference type="FunFam" id="2.30.29.30:FF:000029">
    <property type="entry name" value="Insulin receptor substrate 1"/>
    <property type="match status" value="1"/>
</dbReference>
<dbReference type="FunFam" id="2.30.29.30:FF:000129">
    <property type="entry name" value="Insulin receptor substrate 1"/>
    <property type="match status" value="1"/>
</dbReference>
<dbReference type="Gene3D" id="2.30.29.30">
    <property type="entry name" value="Pleckstrin-homology domain (PH domain)/Phosphotyrosine-binding domain (PTB)"/>
    <property type="match status" value="2"/>
</dbReference>
<dbReference type="IDEAL" id="IID00657"/>
<dbReference type="InterPro" id="IPR039011">
    <property type="entry name" value="IRS"/>
</dbReference>
<dbReference type="InterPro" id="IPR002404">
    <property type="entry name" value="IRS_PTB"/>
</dbReference>
<dbReference type="InterPro" id="IPR011993">
    <property type="entry name" value="PH-like_dom_sf"/>
</dbReference>
<dbReference type="InterPro" id="IPR001849">
    <property type="entry name" value="PH_domain"/>
</dbReference>
<dbReference type="PANTHER" id="PTHR10614">
    <property type="entry name" value="INSULIN RECEPTOR SUBSTRATE"/>
    <property type="match status" value="1"/>
</dbReference>
<dbReference type="PANTHER" id="PTHR10614:SF11">
    <property type="entry name" value="INSULIN RECEPTOR SUBSTRATE 1"/>
    <property type="match status" value="1"/>
</dbReference>
<dbReference type="Pfam" id="PF02174">
    <property type="entry name" value="IRS"/>
    <property type="match status" value="1"/>
</dbReference>
<dbReference type="Pfam" id="PF00169">
    <property type="entry name" value="PH"/>
    <property type="match status" value="1"/>
</dbReference>
<dbReference type="PRINTS" id="PR00628">
    <property type="entry name" value="INSULINRSI"/>
</dbReference>
<dbReference type="SMART" id="SM01244">
    <property type="entry name" value="IRS"/>
    <property type="match status" value="1"/>
</dbReference>
<dbReference type="SMART" id="SM00233">
    <property type="entry name" value="PH"/>
    <property type="match status" value="1"/>
</dbReference>
<dbReference type="SMART" id="SM00310">
    <property type="entry name" value="PTBI"/>
    <property type="match status" value="1"/>
</dbReference>
<dbReference type="SUPFAM" id="SSF50729">
    <property type="entry name" value="PH domain-like"/>
    <property type="match status" value="2"/>
</dbReference>
<dbReference type="PROSITE" id="PS51064">
    <property type="entry name" value="IRS_PTB"/>
    <property type="match status" value="1"/>
</dbReference>
<dbReference type="PROSITE" id="PS50003">
    <property type="entry name" value="PH_DOMAIN"/>
    <property type="match status" value="1"/>
</dbReference>
<name>IRS1_HUMAN</name>
<evidence type="ECO:0000250" key="1"/>
<evidence type="ECO:0000250" key="2">
    <source>
        <dbReference type="UniProtKB" id="P35569"/>
    </source>
</evidence>
<evidence type="ECO:0000250" key="3">
    <source>
        <dbReference type="UniProtKB" id="P35570"/>
    </source>
</evidence>
<evidence type="ECO:0000255" key="4">
    <source>
        <dbReference type="PROSITE-ProRule" id="PRU00145"/>
    </source>
</evidence>
<evidence type="ECO:0000255" key="5">
    <source>
        <dbReference type="PROSITE-ProRule" id="PRU00389"/>
    </source>
</evidence>
<evidence type="ECO:0000256" key="6">
    <source>
        <dbReference type="SAM" id="MobiDB-lite"/>
    </source>
</evidence>
<evidence type="ECO:0000269" key="7">
    <source>
    </source>
</evidence>
<evidence type="ECO:0000269" key="8">
    <source>
    </source>
</evidence>
<evidence type="ECO:0000269" key="9">
    <source>
    </source>
</evidence>
<evidence type="ECO:0000269" key="10">
    <source>
    </source>
</evidence>
<evidence type="ECO:0000269" key="11">
    <source>
    </source>
</evidence>
<evidence type="ECO:0000269" key="12">
    <source>
    </source>
</evidence>
<evidence type="ECO:0000269" key="13">
    <source>
    </source>
</evidence>
<evidence type="ECO:0000269" key="14">
    <source>
    </source>
</evidence>
<evidence type="ECO:0000269" key="15">
    <source>
    </source>
</evidence>
<evidence type="ECO:0000269" key="16">
    <source>
    </source>
</evidence>
<evidence type="ECO:0000269" key="17">
    <source>
    </source>
</evidence>
<evidence type="ECO:0000269" key="18">
    <source>
    </source>
</evidence>
<evidence type="ECO:0000269" key="19">
    <source>
    </source>
</evidence>
<evidence type="ECO:0000269" key="20">
    <source>
    </source>
</evidence>
<evidence type="ECO:0000269" key="21">
    <source>
    </source>
</evidence>
<evidence type="ECO:0000269" key="22">
    <source>
    </source>
</evidence>
<evidence type="ECO:0000269" key="23">
    <source>
    </source>
</evidence>
<evidence type="ECO:0000269" key="24">
    <source>
    </source>
</evidence>
<evidence type="ECO:0000269" key="25">
    <source>
    </source>
</evidence>
<evidence type="ECO:0000269" key="26">
    <source>
    </source>
</evidence>
<evidence type="ECO:0000269" key="27">
    <source>
    </source>
</evidence>
<evidence type="ECO:0000269" key="28">
    <source>
    </source>
</evidence>
<evidence type="ECO:0000269" key="29">
    <source>
    </source>
</evidence>
<evidence type="ECO:0000269" key="30">
    <source>
    </source>
</evidence>
<evidence type="ECO:0000269" key="31">
    <source>
    </source>
</evidence>
<evidence type="ECO:0000269" key="32">
    <source>
    </source>
</evidence>
<evidence type="ECO:0000269" key="33">
    <source>
    </source>
</evidence>
<evidence type="ECO:0000269" key="34">
    <source>
    </source>
</evidence>
<evidence type="ECO:0000269" key="35">
    <source>
    </source>
</evidence>
<evidence type="ECO:0000269" key="36">
    <source>
    </source>
</evidence>
<evidence type="ECO:0000305" key="37"/>
<evidence type="ECO:0007744" key="38">
    <source>
    </source>
</evidence>
<evidence type="ECO:0007744" key="39">
    <source>
    </source>
</evidence>
<evidence type="ECO:0007744" key="40">
    <source>
    </source>
</evidence>
<evidence type="ECO:0007744" key="41">
    <source>
    </source>
</evidence>
<evidence type="ECO:0007829" key="42">
    <source>
        <dbReference type="PDB" id="1K3A"/>
    </source>
</evidence>
<evidence type="ECO:0007829" key="43">
    <source>
        <dbReference type="PDB" id="1QQG"/>
    </source>
</evidence>
<evidence type="ECO:0007829" key="44">
    <source>
        <dbReference type="PDB" id="5U1M"/>
    </source>
</evidence>
<keyword id="KW-0002">3D-structure</keyword>
<keyword id="KW-0963">Cytoplasm</keyword>
<keyword id="KW-0219">Diabetes mellitus</keyword>
<keyword id="KW-0225">Disease variant</keyword>
<keyword id="KW-1017">Isopeptide bond</keyword>
<keyword id="KW-0539">Nucleus</keyword>
<keyword id="KW-0597">Phosphoprotein</keyword>
<keyword id="KW-1267">Proteomics identification</keyword>
<keyword id="KW-1185">Reference proteome</keyword>
<keyword id="KW-0677">Repeat</keyword>
<keyword id="KW-0702">S-nitrosylation</keyword>
<keyword id="KW-0807">Transducer</keyword>
<keyword id="KW-0832">Ubl conjugation</keyword>
<organism>
    <name type="scientific">Homo sapiens</name>
    <name type="common">Human</name>
    <dbReference type="NCBI Taxonomy" id="9606"/>
    <lineage>
        <taxon>Eukaryota</taxon>
        <taxon>Metazoa</taxon>
        <taxon>Chordata</taxon>
        <taxon>Craniata</taxon>
        <taxon>Vertebrata</taxon>
        <taxon>Euteleostomi</taxon>
        <taxon>Mammalia</taxon>
        <taxon>Eutheria</taxon>
        <taxon>Euarchontoglires</taxon>
        <taxon>Primates</taxon>
        <taxon>Haplorrhini</taxon>
        <taxon>Catarrhini</taxon>
        <taxon>Hominidae</taxon>
        <taxon>Homo</taxon>
    </lineage>
</organism>
<accession>P35568</accession>
<proteinExistence type="evidence at protein level"/>
<protein>
    <recommendedName>
        <fullName>Insulin receptor substrate 1</fullName>
        <shortName>IRS-1</shortName>
    </recommendedName>
</protein>
<feature type="chain" id="PRO_0000084236" description="Insulin receptor substrate 1">
    <location>
        <begin position="1"/>
        <end position="1242"/>
    </location>
</feature>
<feature type="domain" description="PH" evidence="4">
    <location>
        <begin position="12"/>
        <end position="115"/>
    </location>
</feature>
<feature type="domain" description="IRS-type PTB" evidence="5">
    <location>
        <begin position="160"/>
        <end position="264"/>
    </location>
</feature>
<feature type="region of interest" description="Mediates interaction with PHIP" evidence="1">
    <location>
        <begin position="3"/>
        <end position="137"/>
    </location>
</feature>
<feature type="region of interest" description="Disordered" evidence="6">
    <location>
        <begin position="262"/>
        <end position="430"/>
    </location>
</feature>
<feature type="region of interest" description="Disordered" evidence="6">
    <location>
        <begin position="592"/>
        <end position="616"/>
    </location>
</feature>
<feature type="region of interest" description="Disordered" evidence="6">
    <location>
        <begin position="668"/>
        <end position="693"/>
    </location>
</feature>
<feature type="region of interest" description="Disordered" evidence="6">
    <location>
        <begin position="771"/>
        <end position="900"/>
    </location>
</feature>
<feature type="region of interest" description="GRB2-binding" evidence="1">
    <location>
        <begin position="896"/>
        <end position="898"/>
    </location>
</feature>
<feature type="region of interest" description="Disordered" evidence="6">
    <location>
        <begin position="918"/>
        <end position="937"/>
    </location>
</feature>
<feature type="region of interest" description="Disordered" evidence="6">
    <location>
        <begin position="1057"/>
        <end position="1146"/>
    </location>
</feature>
<feature type="region of interest" description="Disordered" evidence="6">
    <location>
        <begin position="1190"/>
        <end position="1242"/>
    </location>
</feature>
<feature type="short sequence motif" description="YXXM motif 1">
    <location>
        <begin position="465"/>
        <end position="468"/>
    </location>
</feature>
<feature type="short sequence motif" description="YXXM motif 2">
    <location>
        <begin position="551"/>
        <end position="554"/>
    </location>
</feature>
<feature type="short sequence motif" description="YXXM motif 3">
    <location>
        <begin position="612"/>
        <end position="615"/>
    </location>
</feature>
<feature type="short sequence motif" description="YXXM motif 4">
    <location>
        <begin position="632"/>
        <end position="635"/>
    </location>
</feature>
<feature type="short sequence motif" description="YXXM motif 5">
    <location>
        <begin position="662"/>
        <end position="665"/>
    </location>
</feature>
<feature type="short sequence motif" description="YXXM motif 6">
    <location>
        <begin position="732"/>
        <end position="735"/>
    </location>
</feature>
<feature type="short sequence motif" description="YXXM motif 7">
    <location>
        <begin position="941"/>
        <end position="944"/>
    </location>
</feature>
<feature type="short sequence motif" description="YXXM motif 8">
    <location>
        <begin position="989"/>
        <end position="992"/>
    </location>
</feature>
<feature type="short sequence motif" description="YXXM motif 9">
    <location>
        <begin position="1012"/>
        <end position="1015"/>
    </location>
</feature>
<feature type="compositionally biased region" description="Low complexity" evidence="6">
    <location>
        <begin position="269"/>
        <end position="281"/>
    </location>
</feature>
<feature type="compositionally biased region" description="Basic residues" evidence="6">
    <location>
        <begin position="354"/>
        <end position="363"/>
    </location>
</feature>
<feature type="compositionally biased region" description="Low complexity" evidence="6">
    <location>
        <begin position="383"/>
        <end position="404"/>
    </location>
</feature>
<feature type="compositionally biased region" description="Low complexity" evidence="6">
    <location>
        <begin position="412"/>
        <end position="424"/>
    </location>
</feature>
<feature type="compositionally biased region" description="Basic and acidic residues" evidence="6">
    <location>
        <begin position="592"/>
        <end position="610"/>
    </location>
</feature>
<feature type="compositionally biased region" description="Basic and acidic residues" evidence="6">
    <location>
        <begin position="776"/>
        <end position="785"/>
    </location>
</feature>
<feature type="compositionally biased region" description="Low complexity" evidence="6">
    <location>
        <begin position="801"/>
        <end position="815"/>
    </location>
</feature>
<feature type="compositionally biased region" description="Polar residues" evidence="6">
    <location>
        <begin position="918"/>
        <end position="928"/>
    </location>
</feature>
<feature type="compositionally biased region" description="Polar residues" evidence="6">
    <location>
        <begin position="1073"/>
        <end position="1085"/>
    </location>
</feature>
<feature type="compositionally biased region" description="Polar residues" evidence="6">
    <location>
        <begin position="1102"/>
        <end position="1114"/>
    </location>
</feature>
<feature type="compositionally biased region" description="Pro residues" evidence="6">
    <location>
        <begin position="1198"/>
        <end position="1209"/>
    </location>
</feature>
<feature type="compositionally biased region" description="Low complexity" evidence="6">
    <location>
        <begin position="1210"/>
        <end position="1220"/>
    </location>
</feature>
<feature type="modified residue" description="Phosphoserine" evidence="3">
    <location>
        <position position="3"/>
    </location>
</feature>
<feature type="modified residue" description="Phosphoserine; by CK2" evidence="3">
    <location>
        <position position="99"/>
    </location>
</feature>
<feature type="modified residue" description="Phosphoserine; by RPS6KB1" evidence="21">
    <location>
        <position position="270"/>
    </location>
</feature>
<feature type="modified residue" description="Phosphoserine; by RPS6KB1" evidence="20 21 30">
    <location>
        <position position="307"/>
    </location>
</feature>
<feature type="modified residue" description="Phosphoserine; by IKKB, MAPK8 and RPS6KB1" evidence="20 23 30">
    <location>
        <position position="312"/>
    </location>
</feature>
<feature type="modified residue" description="Phosphoserine" evidence="30">
    <location>
        <position position="315"/>
    </location>
</feature>
<feature type="modified residue" description="Phosphoserine" evidence="41">
    <location>
        <position position="323"/>
    </location>
</feature>
<feature type="modified residue" description="Phosphoserine" evidence="2">
    <location>
        <position position="330"/>
    </location>
</feature>
<feature type="modified residue" description="Phosphoserine" evidence="2">
    <location>
        <position position="345"/>
    </location>
</feature>
<feature type="modified residue" description="Phosphoserine" evidence="40">
    <location>
        <position position="348"/>
    </location>
</feature>
<feature type="modified residue" description="Phosphoserine" evidence="2">
    <location>
        <position position="419"/>
    </location>
</feature>
<feature type="modified residue" description="Phosphothreonine" evidence="3">
    <location>
        <position position="446"/>
    </location>
</feature>
<feature type="modified residue" description="Phosphothreonine" evidence="41">
    <location>
        <position position="453"/>
    </location>
</feature>
<feature type="modified residue" description="Phosphotyrosine; by INSR" evidence="3">
    <location>
        <position position="465"/>
    </location>
</feature>
<feature type="modified residue" description="Phosphoserine; by RPS6KB1" evidence="20 41">
    <location>
        <position position="527"/>
    </location>
</feature>
<feature type="modified residue" description="Phosphotyrosine; by INSR" evidence="24 27">
    <location>
        <position position="612"/>
    </location>
</feature>
<feature type="modified residue" description="Phosphoserine" evidence="3">
    <location>
        <position position="616"/>
    </location>
</feature>
<feature type="modified residue" description="Phosphoserine" evidence="39 41">
    <location>
        <position position="629"/>
    </location>
</feature>
<feature type="modified residue" description="Phosphotyrosine; by INSR" evidence="24">
    <location>
        <position position="632"/>
    </location>
</feature>
<feature type="modified residue" description="Phosphoserine; by RPS6KB1" evidence="20 21 39">
    <location>
        <position position="636"/>
    </location>
</feature>
<feature type="modified residue" description="Phosphotyrosine" evidence="38">
    <location>
        <position position="662"/>
    </location>
</feature>
<feature type="modified residue" description="Phosphoserine; by AMPK and SIK2" evidence="10">
    <location>
        <position position="794"/>
    </location>
</feature>
<feature type="modified residue" description="Phosphoserine" evidence="2">
    <location>
        <position position="892"/>
    </location>
</feature>
<feature type="modified residue" description="Phosphotyrosine; by INSR" evidence="24">
    <location>
        <position position="896"/>
    </location>
</feature>
<feature type="modified residue" description="Phosphotyrosine; by INSR" evidence="23">
    <location>
        <position position="941"/>
    </location>
</feature>
<feature type="modified residue" description="Phosphotyrosine; by INSR" evidence="3">
    <location>
        <position position="989"/>
    </location>
</feature>
<feature type="modified residue" description="Phosphoserine" evidence="2">
    <location>
        <position position="1100"/>
    </location>
</feature>
<feature type="modified residue" description="Phosphoserine; by RPS6KB1 and PKC/PRKCQ" evidence="16 21">
    <location>
        <position position="1101"/>
    </location>
</feature>
<feature type="modified residue" description="Phosphotyrosine; by INSR" evidence="3">
    <location>
        <position position="1179"/>
    </location>
</feature>
<feature type="modified residue" description="Phosphotyrosine; by INSR" evidence="3">
    <location>
        <position position="1229"/>
    </location>
</feature>
<feature type="cross-link" description="Glycyl lysine isopeptide (Lys-Gly) (interchain with G-Cter in ubiquitin)" evidence="28">
    <location>
        <position position="1186"/>
    </location>
</feature>
<feature type="cross-link" description="Glycyl lysine isopeptide (Lys-Gly) (interchain with G-Cter in ubiquitin)" evidence="28">
    <location>
        <position position="1189"/>
    </location>
</feature>
<feature type="sequence variant" id="VAR_014853" description="In dbSNP:rs1801108.">
    <original>P</original>
    <variation>R</variation>
    <location>
        <position position="158"/>
    </location>
</feature>
<feature type="sequence variant" id="VAR_014854" description="In dbSNP:rs1801118.">
    <original>M</original>
    <variation>T</variation>
    <location>
        <position position="209"/>
    </location>
</feature>
<feature type="sequence variant" id="VAR_005299" description="In dbSNP:rs1801276." evidence="34">
    <original>A</original>
    <variation>P</variation>
    <location>
        <position position="512"/>
    </location>
</feature>
<feature type="sequence variant" id="VAR_025320" description="May contribute to insulin resistance by impairing metabolic signaling through PI3K-dependent pathways; dbSNP:rs104893642." evidence="11">
    <original>T</original>
    <variation>R</variation>
    <location>
        <position position="608"/>
    </location>
</feature>
<feature type="sequence variant" id="VAR_005301" description="In T2D; dbSNP:rs1259467443." evidence="36">
    <location>
        <position position="723"/>
    </location>
</feature>
<feature type="sequence variant" id="VAR_014855" description="In dbSNP:rs1801120.">
    <original>S</original>
    <variation>F</variation>
    <location>
        <position position="809"/>
    </location>
</feature>
<feature type="sequence variant" id="VAR_014856" description="In dbSNP:rs1801277.">
    <original>S</original>
    <variation>G</variation>
    <location>
        <position position="892"/>
    </location>
</feature>
<feature type="sequence variant" id="VAR_005300" description="In dbSNP:rs1801278." evidence="8 13 14 17 34">
    <original>G</original>
    <variation>R</variation>
    <location>
        <position position="971"/>
    </location>
</feature>
<feature type="sequence variant" id="VAR_005302" description="In T2D." evidence="7">
    <original>S</original>
    <variation>Y</variation>
    <location>
        <position position="1043"/>
    </location>
</feature>
<feature type="sequence variant" id="VAR_005303" description="In T2D." evidence="7">
    <original>C</original>
    <variation>Y</variation>
    <location>
        <position position="1095"/>
    </location>
</feature>
<feature type="sequence variant" id="VAR_021837" description="In dbSNP:rs3731594.">
    <original>D</original>
    <variation>N</variation>
    <location>
        <position position="1137"/>
    </location>
</feature>
<feature type="mutagenesis site" description="Impaired degradation by the Cul7-RING(FBXW8) complex; when associated with A-312; A-527; A-636 and A-639." evidence="20">
    <original>S</original>
    <variation>A</variation>
    <location>
        <position position="307"/>
    </location>
</feature>
<feature type="mutagenesis site" description="Impaired degradation by the Cul7-RING(FBXW8) complex; when associated with A-307; A-527; A-636 and A-639." evidence="20">
    <original>S</original>
    <variation>A</variation>
    <location>
        <position position="312"/>
    </location>
</feature>
<feature type="mutagenesis site" description="Impaired degradation by the Cul7-RING(FBXW8) complex; when associated with A-307; A-312; A-636 and A-639." evidence="20">
    <original>S</original>
    <variation>A</variation>
    <location>
        <position position="527"/>
    </location>
</feature>
<feature type="mutagenesis site" description="Induces IRS1 degradation." evidence="24">
    <original>Y</original>
    <variation>F</variation>
    <location>
        <position position="612"/>
    </location>
</feature>
<feature type="mutagenesis site" description="Does not affect IRS1 stability." evidence="24">
    <original>Y</original>
    <variation>F</variation>
    <location>
        <position position="632"/>
    </location>
</feature>
<feature type="mutagenesis site" description="Impaired degradation by the Cul7-RING(FBXW8) complex; when associated with A-307; A-312; A-527 and A-639." evidence="20">
    <original>S</original>
    <variation>A</variation>
    <location>
        <position position="636"/>
    </location>
</feature>
<feature type="mutagenesis site" description="Impaired degradation by the Cul7-RING(FBXW8) complex; when associated with A-307; A-312; A-527 and A-636." evidence="20">
    <original>S</original>
    <variation>A</variation>
    <location>
        <position position="639"/>
    </location>
</feature>
<feature type="mutagenesis site" description="Loss of phosphorylation by SIK2." evidence="10">
    <original>S</original>
    <variation>A</variation>
    <location>
        <position position="794"/>
    </location>
</feature>
<feature type="mutagenesis site" description="Significantly reduced TRAF4-mediated ubiquitination; when associated with R-1189." evidence="28">
    <original>K</original>
    <variation>R</variation>
    <location>
        <position position="1186"/>
    </location>
</feature>
<feature type="mutagenesis site" description="Significantly reduced TRAF4-mediated ubiquitination; when associated with R-1186." evidence="28">
    <original>K</original>
    <variation>R</variation>
    <location>
        <position position="1189"/>
    </location>
</feature>
<feature type="sequence conflict" description="In Ref. 2; AAB21608." evidence="37" ref="2">
    <original>G</original>
    <variation>GG</variation>
    <location>
        <position position="134"/>
    </location>
</feature>
<feature type="sequence conflict" description="In Ref. 2; AAB21608." evidence="37" ref="2">
    <original>S</original>
    <variation>R</variation>
    <location>
        <position position="362"/>
    </location>
</feature>
<feature type="sequence conflict" description="In Ref. 2; AAB21608." evidence="37" ref="2">
    <original>P</original>
    <variation>R</variation>
    <location>
        <position position="384"/>
    </location>
</feature>
<feature type="strand" evidence="43">
    <location>
        <begin position="13"/>
        <end position="20"/>
    </location>
</feature>
<feature type="turn" evidence="43">
    <location>
        <begin position="22"/>
        <end position="24"/>
    </location>
</feature>
<feature type="strand" evidence="43">
    <location>
        <begin position="27"/>
        <end position="33"/>
    </location>
</feature>
<feature type="turn" evidence="43">
    <location>
        <begin position="37"/>
        <end position="39"/>
    </location>
</feature>
<feature type="strand" evidence="43">
    <location>
        <begin position="40"/>
        <end position="49"/>
    </location>
</feature>
<feature type="helix" evidence="43">
    <location>
        <begin position="50"/>
        <end position="54"/>
    </location>
</feature>
<feature type="strand" evidence="43">
    <location>
        <begin position="61"/>
        <end position="65"/>
    </location>
</feature>
<feature type="helix" evidence="43">
    <location>
        <begin position="66"/>
        <end position="68"/>
    </location>
</feature>
<feature type="strand" evidence="43">
    <location>
        <begin position="69"/>
        <end position="75"/>
    </location>
</feature>
<feature type="strand" evidence="43">
    <location>
        <begin position="81"/>
        <end position="90"/>
    </location>
</feature>
<feature type="strand" evidence="43">
    <location>
        <begin position="92"/>
        <end position="96"/>
    </location>
</feature>
<feature type="helix" evidence="43">
    <location>
        <begin position="100"/>
        <end position="113"/>
    </location>
</feature>
<feature type="strand" evidence="44">
    <location>
        <begin position="162"/>
        <end position="172"/>
    </location>
</feature>
<feature type="helix" evidence="44">
    <location>
        <begin position="173"/>
        <end position="176"/>
    </location>
</feature>
<feature type="strand" evidence="44">
    <location>
        <begin position="181"/>
        <end position="187"/>
    </location>
</feature>
<feature type="strand" evidence="44">
    <location>
        <begin position="189"/>
        <end position="196"/>
    </location>
</feature>
<feature type="strand" evidence="44">
    <location>
        <begin position="203"/>
        <end position="207"/>
    </location>
</feature>
<feature type="helix" evidence="44">
    <location>
        <begin position="208"/>
        <end position="210"/>
    </location>
</feature>
<feature type="strand" evidence="44">
    <location>
        <begin position="211"/>
        <end position="217"/>
    </location>
</feature>
<feature type="strand" evidence="44">
    <location>
        <begin position="220"/>
        <end position="225"/>
    </location>
</feature>
<feature type="strand" evidence="44">
    <location>
        <begin position="233"/>
        <end position="239"/>
    </location>
</feature>
<feature type="helix" evidence="44">
    <location>
        <begin position="243"/>
        <end position="262"/>
    </location>
</feature>
<feature type="strand" evidence="42">
    <location>
        <begin position="897"/>
        <end position="901"/>
    </location>
</feature>